<dbReference type="EC" id="2.4.1.350" evidence="2"/>
<dbReference type="EC" id="2.4.1.-" evidence="2"/>
<dbReference type="SMR" id="P0DO75"/>
<dbReference type="UniPathway" id="UPA00213"/>
<dbReference type="GO" id="GO:0080043">
    <property type="term" value="F:quercetin 3-O-glucosyltransferase activity"/>
    <property type="evidence" value="ECO:0007669"/>
    <property type="project" value="TreeGrafter"/>
</dbReference>
<dbReference type="GO" id="GO:0080044">
    <property type="term" value="F:quercetin 7-O-glucosyltransferase activity"/>
    <property type="evidence" value="ECO:0007669"/>
    <property type="project" value="TreeGrafter"/>
</dbReference>
<dbReference type="CDD" id="cd03784">
    <property type="entry name" value="GT1_Gtf-like"/>
    <property type="match status" value="1"/>
</dbReference>
<dbReference type="FunFam" id="3.40.50.2000:FF:000019">
    <property type="entry name" value="Glycosyltransferase"/>
    <property type="match status" value="1"/>
</dbReference>
<dbReference type="Gene3D" id="3.40.50.2000">
    <property type="entry name" value="Glycogen Phosphorylase B"/>
    <property type="match status" value="2"/>
</dbReference>
<dbReference type="InterPro" id="IPR002213">
    <property type="entry name" value="UDP_glucos_trans"/>
</dbReference>
<dbReference type="InterPro" id="IPR035595">
    <property type="entry name" value="UDP_glycos_trans_CS"/>
</dbReference>
<dbReference type="PANTHER" id="PTHR11926">
    <property type="entry name" value="GLUCOSYL/GLUCURONOSYL TRANSFERASES"/>
    <property type="match status" value="1"/>
</dbReference>
<dbReference type="PANTHER" id="PTHR11926:SF870">
    <property type="entry name" value="UDP-GLYCOSYLTRANSFERASE 75B1"/>
    <property type="match status" value="1"/>
</dbReference>
<dbReference type="Pfam" id="PF00201">
    <property type="entry name" value="UDPGT"/>
    <property type="match status" value="1"/>
</dbReference>
<dbReference type="SUPFAM" id="SSF53756">
    <property type="entry name" value="UDP-Glycosyltransferase/glycogen phosphorylase"/>
    <property type="match status" value="1"/>
</dbReference>
<keyword id="KW-0808">Transferase</keyword>
<sequence>MGDNGDGGEKKELKENVKKGKELGRQAIGEGYINPSLQLARRLISLGVNVTFATTVLAGRRMKNKTHQTATTPGLSFATFSDGFDDETLKPNGDLTHYFSELRRCGSESLTHLITSAANEGRPITFVIYSLLLSWAADIASTYDIPSALFFAQPATVLALYFYYFHGYGDTICSKLQDPSSYIELPGLPLLTSQDMPSFFSPSGPHAFILPPMREQAEFLGRQSQPKVLVNTFDALEADALRAIDKLKMLAIGPLIPSALLGGNDSSDASFCGDLFQVSSEDYIEWLNSKPDSSVVYISVGSICVLSDEQEDELVHALLNSGHTFLWVKRSKENNEGVKQETDEEKLKKLEEQGKMVSWCRQVEVLKHPALGCFLTHCGWNSTIESLVSGLPVVAFPQQIDQATNAKLIEDVWKTGVRVKANTEGIVEREEIRRCLDLVMGSRDGQKEEIERNAKKWKELARQAIGEGGSSDSNLKTFLWEIDLEI</sequence>
<comment type="function">
    <text evidence="2">UDP-glycosyltransferase involved in the biosynthesis of cucurbitacin and mogroside tetracyclic triterpene natural products (e.g. siamenoside I and mogrosides IV, V and VI) (PubMed:27821754). Cucurbitacins have cytotoxic properties and exhibit deterrent taste as a defense barrier against herbivores (PubMed:27821754). Mogrosides are nonsugar highly oxygenated compounds used as high-intensity zero-calorie sweeteners; they also possess pharmacological properties such as regulating immunity, lowering blood sugar and lipid levels, protecting the liver, and acting as antioxidants and antitumor agents (PubMed:27821754). Catalyzes the C3 primary glucosylation of mogrol, mogroside I-A1, mogroside II-A1 and mogroside II-A (PubMed:27821754).</text>
</comment>
<comment type="catalytic activity">
    <reaction evidence="2">
        <text>mogrol + UDP-alpha-D-glucose = mogroside IE + UDP + H(+)</text>
        <dbReference type="Rhea" id="RHEA:52044"/>
        <dbReference type="ChEBI" id="CHEBI:15378"/>
        <dbReference type="ChEBI" id="CHEBI:58223"/>
        <dbReference type="ChEBI" id="CHEBI:58885"/>
        <dbReference type="ChEBI" id="CHEBI:138974"/>
        <dbReference type="ChEBI" id="CHEBI:138975"/>
        <dbReference type="EC" id="2.4.1.350"/>
    </reaction>
    <physiologicalReaction direction="left-to-right" evidence="2">
        <dbReference type="Rhea" id="RHEA:52045"/>
    </physiologicalReaction>
</comment>
<comment type="catalytic activity">
    <reaction evidence="2">
        <text>mogroside I-A1 + UDP-alpha-D-glucose = mogroside IIE + UDP + H(+)</text>
        <dbReference type="Rhea" id="RHEA:80183"/>
        <dbReference type="ChEBI" id="CHEBI:15378"/>
        <dbReference type="ChEBI" id="CHEBI:58223"/>
        <dbReference type="ChEBI" id="CHEBI:58885"/>
        <dbReference type="ChEBI" id="CHEBI:145198"/>
        <dbReference type="ChEBI" id="CHEBI:229951"/>
    </reaction>
    <physiologicalReaction direction="left-to-right" evidence="2">
        <dbReference type="Rhea" id="RHEA:80184"/>
    </physiologicalReaction>
</comment>
<comment type="catalytic activity">
    <reaction evidence="2">
        <text>mogroside II-A1 + UDP-alpha-D-glucose = mogroside IIIX + UDP + H(+)</text>
        <dbReference type="Rhea" id="RHEA:81895"/>
        <dbReference type="ChEBI" id="CHEBI:15378"/>
        <dbReference type="ChEBI" id="CHEBI:58223"/>
        <dbReference type="ChEBI" id="CHEBI:58885"/>
        <dbReference type="ChEBI" id="CHEBI:229952"/>
        <dbReference type="ChEBI" id="CHEBI:232043"/>
    </reaction>
    <physiologicalReaction direction="left-to-right" evidence="2">
        <dbReference type="Rhea" id="RHEA:81896"/>
    </physiologicalReaction>
</comment>
<comment type="catalytic activity">
    <reaction evidence="2">
        <text>mogroside II-A + UDP-alpha-D-glucose = mogroside III + UDP + H(+)</text>
        <dbReference type="Rhea" id="RHEA:81899"/>
        <dbReference type="ChEBI" id="CHEBI:15378"/>
        <dbReference type="ChEBI" id="CHEBI:58223"/>
        <dbReference type="ChEBI" id="CHEBI:58885"/>
        <dbReference type="ChEBI" id="CHEBI:229960"/>
        <dbReference type="ChEBI" id="CHEBI:232044"/>
    </reaction>
    <physiologicalReaction direction="left-to-right" evidence="2">
        <dbReference type="Rhea" id="RHEA:81900"/>
    </physiologicalReaction>
</comment>
<comment type="pathway">
    <text evidence="2">Secondary metabolite biosynthesis; terpenoid biosynthesis.</text>
</comment>
<comment type="tissue specificity">
    <text evidence="2">Highly expressed in young fruits 15 days after anthesis (15-DAA).</text>
</comment>
<comment type="miscellaneous">
    <text evidence="5">Mogrosides, the major active constituents of S.grosvenorii fruits, are a mixture of cucurbitane-type triterpenoid glycosides that have been proven to be powerful and zero-caloric sweeteners and can hence be used as a sucrose substitute for diabetic and obese patients.</text>
</comment>
<comment type="similarity">
    <text evidence="4">Belongs to the UDP-glycosyltransferase family.</text>
</comment>
<accession>P0DO75</accession>
<evidence type="ECO:0000250" key="1">
    <source>
        <dbReference type="UniProtKB" id="K7NBW3"/>
    </source>
</evidence>
<evidence type="ECO:0000269" key="2">
    <source>
    </source>
</evidence>
<evidence type="ECO:0000303" key="3">
    <source>
    </source>
</evidence>
<evidence type="ECO:0000305" key="4"/>
<evidence type="ECO:0000305" key="5">
    <source>
    </source>
</evidence>
<protein>
    <recommendedName>
        <fullName evidence="4">Mogroside I-E synthase</fullName>
        <ecNumber evidence="2">2.4.1.350</ecNumber>
    </recommendedName>
    <alternativeName>
        <fullName evidence="4">Mogroside II-E synthase</fullName>
        <ecNumber evidence="2">2.4.1.-</ecNumber>
    </alternativeName>
    <alternativeName>
        <fullName evidence="4">Mogroside III synthase</fullName>
        <ecNumber evidence="2">2.4.1.-</ecNumber>
    </alternativeName>
    <alternativeName>
        <fullName evidence="4">Mogroside IIIx synthase</fullName>
        <ecNumber evidence="2">2.4.1.-</ecNumber>
    </alternativeName>
    <alternativeName>
        <fullName evidence="3">UDP-glycosyltransferase 75-281-2</fullName>
        <shortName evidence="3">UGT75-281-2</shortName>
    </alternativeName>
</protein>
<reference key="1">
    <citation type="journal article" date="2016" name="Proc. Natl. Acad. Sci. U.S.A.">
        <title>The biosynthetic pathway of the nonsugar, high-intensity sweetener mogroside V from Siraitia grosvenorii.</title>
        <authorList>
            <person name="Itkin M."/>
            <person name="Davidovich-Rikanati R."/>
            <person name="Cohen S."/>
            <person name="Portnoy V."/>
            <person name="Doron-Faigenboim A."/>
            <person name="Oren E."/>
            <person name="Freilich S."/>
            <person name="Tzuri G."/>
            <person name="Baranes N."/>
            <person name="Shen S."/>
            <person name="Petreikov M."/>
            <person name="Sertchook R."/>
            <person name="Ben-Dor S."/>
            <person name="Gottlieb H."/>
            <person name="Hernandez A."/>
            <person name="Nelson D.R."/>
            <person name="Paris H.S."/>
            <person name="Tadmor Y."/>
            <person name="Burger Y."/>
            <person name="Lewinsohn E."/>
            <person name="Katzir N."/>
            <person name="Schaffer A."/>
        </authorList>
    </citation>
    <scope>NUCLEOTIDE SEQUENCE</scope>
    <scope>FUNCTION</scope>
    <scope>CATALYTIC ACTIVITY</scope>
    <scope>PATHWAY</scope>
    <scope>TISSUE SPECIFICITY</scope>
    <scope>GENE FAMILY</scope>
    <scope>NOMENCLATURE</scope>
</reference>
<gene>
    <name evidence="3" type="primary">UGT75-281-2</name>
</gene>
<name>GT752_SIRGR</name>
<feature type="chain" id="PRO_0000460921" description="Mogroside I-E synthase">
    <location>
        <begin position="1"/>
        <end position="486"/>
    </location>
</feature>
<feature type="binding site" evidence="1">
    <location>
        <position position="302"/>
    </location>
    <ligand>
        <name>UDP-alpha-D-glucose</name>
        <dbReference type="ChEBI" id="CHEBI:58885"/>
    </ligand>
</feature>
<feature type="binding site" evidence="1">
    <location>
        <position position="360"/>
    </location>
    <ligand>
        <name>UDP-alpha-D-glucose</name>
        <dbReference type="ChEBI" id="CHEBI:58885"/>
    </ligand>
</feature>
<feature type="binding site" evidence="1">
    <location>
        <position position="362"/>
    </location>
    <ligand>
        <name>UDP-alpha-D-glucose</name>
        <dbReference type="ChEBI" id="CHEBI:58885"/>
    </ligand>
</feature>
<feature type="binding site" evidence="1">
    <location>
        <position position="380"/>
    </location>
    <ligand>
        <name>UDP-alpha-D-glucose</name>
        <dbReference type="ChEBI" id="CHEBI:58885"/>
    </ligand>
</feature>
<feature type="binding site" evidence="1">
    <location>
        <position position="381"/>
    </location>
    <ligand>
        <name>UDP-alpha-D-glucose</name>
        <dbReference type="ChEBI" id="CHEBI:58885"/>
    </ligand>
</feature>
<feature type="binding site" evidence="1">
    <location>
        <position position="382"/>
    </location>
    <ligand>
        <name>UDP-alpha-D-glucose</name>
        <dbReference type="ChEBI" id="CHEBI:58885"/>
    </ligand>
</feature>
<feature type="binding site" evidence="1">
    <location>
        <position position="385"/>
    </location>
    <ligand>
        <name>UDP-alpha-D-glucose</name>
        <dbReference type="ChEBI" id="CHEBI:58885"/>
    </ligand>
</feature>
<feature type="binding site" evidence="1">
    <location>
        <position position="401"/>
    </location>
    <ligand>
        <name>UDP-alpha-D-glucose</name>
        <dbReference type="ChEBI" id="CHEBI:58885"/>
    </ligand>
</feature>
<feature type="binding site" evidence="1">
    <location>
        <position position="402"/>
    </location>
    <ligand>
        <name>UDP-alpha-D-glucose</name>
        <dbReference type="ChEBI" id="CHEBI:58885"/>
    </ligand>
</feature>
<proteinExistence type="evidence at protein level"/>
<organism>
    <name type="scientific">Siraitia grosvenorii</name>
    <name type="common">Monk's fruit</name>
    <name type="synonym">Luo han guo</name>
    <dbReference type="NCBI Taxonomy" id="190515"/>
    <lineage>
        <taxon>Eukaryota</taxon>
        <taxon>Viridiplantae</taxon>
        <taxon>Streptophyta</taxon>
        <taxon>Embryophyta</taxon>
        <taxon>Tracheophyta</taxon>
        <taxon>Spermatophyta</taxon>
        <taxon>Magnoliopsida</taxon>
        <taxon>eudicotyledons</taxon>
        <taxon>Gunneridae</taxon>
        <taxon>Pentapetalae</taxon>
        <taxon>rosids</taxon>
        <taxon>fabids</taxon>
        <taxon>Cucurbitales</taxon>
        <taxon>Cucurbitaceae</taxon>
        <taxon>Siraitieae</taxon>
        <taxon>Siraitia</taxon>
    </lineage>
</organism>